<gene>
    <name evidence="7" type="primary">ZNF713</name>
</gene>
<evidence type="ECO:0000255" key="1">
    <source>
        <dbReference type="PROSITE-ProRule" id="PRU00042"/>
    </source>
</evidence>
<evidence type="ECO:0000255" key="2">
    <source>
        <dbReference type="PROSITE-ProRule" id="PRU00119"/>
    </source>
</evidence>
<evidence type="ECO:0000256" key="3">
    <source>
        <dbReference type="SAM" id="MobiDB-lite"/>
    </source>
</evidence>
<evidence type="ECO:0000269" key="4">
    <source>
    </source>
</evidence>
<evidence type="ECO:0000305" key="5"/>
<evidence type="ECO:0000305" key="6">
    <source>
    </source>
</evidence>
<evidence type="ECO:0000312" key="7">
    <source>
        <dbReference type="HGNC" id="HGNC:22043"/>
    </source>
</evidence>
<accession>Q8N859</accession>
<accession>A0A0M3HEQ9</accession>
<feature type="chain" id="PRO_0000233285" description="Zinc finger protein 713">
    <location>
        <begin position="1"/>
        <end position="443"/>
    </location>
</feature>
<feature type="domain" description="KRAB" evidence="2">
    <location>
        <begin position="32"/>
        <end position="102"/>
    </location>
</feature>
<feature type="zinc finger region" description="C2H2-type 1; degenerate" evidence="1">
    <location>
        <begin position="255"/>
        <end position="280"/>
    </location>
</feature>
<feature type="zinc finger region" description="C2H2-type 2" evidence="1">
    <location>
        <begin position="286"/>
        <end position="308"/>
    </location>
</feature>
<feature type="zinc finger region" description="C2H2-type 3" evidence="1">
    <location>
        <begin position="314"/>
        <end position="336"/>
    </location>
</feature>
<feature type="zinc finger region" description="C2H2-type 4" evidence="1">
    <location>
        <begin position="342"/>
        <end position="364"/>
    </location>
</feature>
<feature type="zinc finger region" description="C2H2-type 5" evidence="1">
    <location>
        <begin position="370"/>
        <end position="392"/>
    </location>
</feature>
<feature type="zinc finger region" description="C2H2-type 6" evidence="1">
    <location>
        <begin position="398"/>
        <end position="420"/>
    </location>
</feature>
<feature type="region of interest" description="Disordered" evidence="3">
    <location>
        <begin position="1"/>
        <end position="23"/>
    </location>
</feature>
<feature type="region of interest" description="Disordered" evidence="3">
    <location>
        <begin position="99"/>
        <end position="118"/>
    </location>
</feature>
<feature type="compositionally biased region" description="Polar residues" evidence="3">
    <location>
        <begin position="1"/>
        <end position="10"/>
    </location>
</feature>
<feature type="compositionally biased region" description="Basic and acidic residues" evidence="3">
    <location>
        <begin position="99"/>
        <end position="112"/>
    </location>
</feature>
<keyword id="KW-1268">Autism spectrum disorder</keyword>
<keyword id="KW-0238">DNA-binding</keyword>
<keyword id="KW-0479">Metal-binding</keyword>
<keyword id="KW-0539">Nucleus</keyword>
<keyword id="KW-1267">Proteomics identification</keyword>
<keyword id="KW-1185">Reference proteome</keyword>
<keyword id="KW-0677">Repeat</keyword>
<keyword id="KW-0804">Transcription</keyword>
<keyword id="KW-0805">Transcription regulation</keyword>
<keyword id="KW-0818">Triplet repeat expansion</keyword>
<keyword id="KW-0862">Zinc</keyword>
<keyword id="KW-0863">Zinc-finger</keyword>
<sequence length="443" mass="51563">MPSQNAVFSQEGNMEEEEMNDGSQMVRSQESLTFQDVAVDFTREEWDQLYPAQKNLYRDVMLENYRNLVALGYQLCKPEVIAQLELEEEWVIERDSLLDTHPDGENRPEIKKSTTSQNISDENQTHEMIMERLAGDSFWYSILGGLWDFDYHPEFNQENHKRYLGQVTLTHKKITQERSLECNKFAENCNLNSNLMQQRIPSIKIPLNSDTQGNSIKHNSDLIYYQGNYVRETPYEYSECGKIFNQHILLTDHIHTAEKPSECGKAFSHTSSLSQPQMLLTGEKPYKCDECGKRFSQRIHLIQHQRIHTGEKPFICNGCGKAFRQHSSFTQHLRIHTGEKPYKCNQCGKAFSRITSLTEHHRLHTGEKPYECGFCGKAFSQRTHLNQHERTHTGEKPYKCNECGKAFSQSAHLNQHRKIHTREKLCEYKCEQTVRHSPSFSST</sequence>
<protein>
    <recommendedName>
        <fullName evidence="5">Zinc finger protein 713</fullName>
    </recommendedName>
</protein>
<comment type="function">
    <text>May be involved in transcriptional regulation.</text>
</comment>
<comment type="subcellular location">
    <subcellularLocation>
        <location evidence="5">Nucleus</location>
    </subcellularLocation>
</comment>
<comment type="tissue specificity">
    <text evidence="4">Expressed in fetal and adult brain.</text>
</comment>
<comment type="polymorphism">
    <text evidence="6">The ZNF713 gene contains a polymorphic CGG-repeat expansion in the non-coding region: 5 to 22 repeats are found in the normal population, most frequently 7. Higher numbers of repeats (50-200 CGG) are considered as premutations, which may affect methylation and cause mitotic instability.</text>
</comment>
<comment type="disease">
    <text evidence="4">A 7p11.2 folate-sensitive fragile site, FRA7A, has been identified in 2 unrelated families diagnosed with an autistic disorder. FRA7A is associated with a CGG-repeat expansion in a ZNF713 5'-intron. In the first family, the expanded allele contained about 450 CGG-repeats. It showed hypermethylation and reduced ZNF713 expression. In the second family, 3 autistic siblings exhibited a heterozygous expansion of about 70 repeats, corresponding to premutations, which were partially or mosaically methylated. Mitotic instability of the premutation was observed in one affected sibling. In this family, ZNF713 tends to be up-regulated. It has been suggested that ZNF713 misregulation in the brain might be involved in the pathogenicity of autistic disorder (PubMed:25196122).</text>
</comment>
<comment type="similarity">
    <text evidence="5">Belongs to the krueppel C2H2-type zinc-finger protein family.</text>
</comment>
<name>ZN713_HUMAN</name>
<organism>
    <name type="scientific">Homo sapiens</name>
    <name type="common">Human</name>
    <dbReference type="NCBI Taxonomy" id="9606"/>
    <lineage>
        <taxon>Eukaryota</taxon>
        <taxon>Metazoa</taxon>
        <taxon>Chordata</taxon>
        <taxon>Craniata</taxon>
        <taxon>Vertebrata</taxon>
        <taxon>Euteleostomi</taxon>
        <taxon>Mammalia</taxon>
        <taxon>Eutheria</taxon>
        <taxon>Euarchontoglires</taxon>
        <taxon>Primates</taxon>
        <taxon>Haplorrhini</taxon>
        <taxon>Catarrhini</taxon>
        <taxon>Hominidae</taxon>
        <taxon>Homo</taxon>
    </lineage>
</organism>
<dbReference type="EMBL" id="AC092579">
    <property type="status" value="NOT_ANNOTATED_CDS"/>
    <property type="molecule type" value="Genomic_DNA"/>
</dbReference>
<dbReference type="EMBL" id="AC092647">
    <property type="status" value="NOT_ANNOTATED_CDS"/>
    <property type="molecule type" value="Genomic_DNA"/>
</dbReference>
<dbReference type="EMBL" id="AK097282">
    <property type="protein sequence ID" value="BAC04991.1"/>
    <property type="molecule type" value="mRNA"/>
</dbReference>
<dbReference type="CCDS" id="CCDS34639.2"/>
<dbReference type="RefSeq" id="NP_872439.2">
    <property type="nucleotide sequence ID" value="NM_182633.3"/>
</dbReference>
<dbReference type="SMR" id="Q8N859"/>
<dbReference type="BioGRID" id="131546">
    <property type="interactions" value="8"/>
</dbReference>
<dbReference type="FunCoup" id="Q8N859">
    <property type="interactions" value="25"/>
</dbReference>
<dbReference type="IntAct" id="Q8N859">
    <property type="interactions" value="3"/>
</dbReference>
<dbReference type="STRING" id="9606.ENSP00000416662"/>
<dbReference type="iPTMnet" id="Q8N859"/>
<dbReference type="PhosphoSitePlus" id="Q8N859"/>
<dbReference type="BioMuta" id="ZNF713"/>
<dbReference type="DMDM" id="74759999"/>
<dbReference type="jPOST" id="Q8N859"/>
<dbReference type="MassIVE" id="Q8N859"/>
<dbReference type="PaxDb" id="9606-ENSP00000416662"/>
<dbReference type="PeptideAtlas" id="Q8N859"/>
<dbReference type="ProteomicsDB" id="72376"/>
<dbReference type="Antibodypedia" id="13842">
    <property type="antibodies" value="110 antibodies from 19 providers"/>
</dbReference>
<dbReference type="DNASU" id="349075"/>
<dbReference type="Ensembl" id="ENST00000429591.4">
    <property type="protein sequence ID" value="ENSP00000416662.3"/>
    <property type="gene ID" value="ENSG00000178665.16"/>
</dbReference>
<dbReference type="GeneID" id="349075"/>
<dbReference type="KEGG" id="hsa:349075"/>
<dbReference type="MANE-Select" id="ENST00000429591.4">
    <property type="protein sequence ID" value="ENSP00000416662.3"/>
    <property type="RefSeq nucleotide sequence ID" value="NM_182633.3"/>
    <property type="RefSeq protein sequence ID" value="NP_872439.2"/>
</dbReference>
<dbReference type="UCSC" id="uc003trc.2">
    <property type="organism name" value="human"/>
</dbReference>
<dbReference type="AGR" id="HGNC:22043"/>
<dbReference type="CTD" id="349075"/>
<dbReference type="DisGeNET" id="349075"/>
<dbReference type="GeneCards" id="ZNF713"/>
<dbReference type="HGNC" id="HGNC:22043">
    <property type="gene designation" value="ZNF713"/>
</dbReference>
<dbReference type="HPA" id="ENSG00000178665">
    <property type="expression patterns" value="Low tissue specificity"/>
</dbReference>
<dbReference type="MIM" id="616181">
    <property type="type" value="gene"/>
</dbReference>
<dbReference type="neXtProt" id="NX_Q8N859"/>
<dbReference type="OpenTargets" id="ENSG00000178665"/>
<dbReference type="PharmGKB" id="PA143485679"/>
<dbReference type="VEuPathDB" id="HostDB:ENSG00000178665"/>
<dbReference type="eggNOG" id="KOG1721">
    <property type="taxonomic scope" value="Eukaryota"/>
</dbReference>
<dbReference type="GeneTree" id="ENSGT00950000182890"/>
<dbReference type="InParanoid" id="Q8N859"/>
<dbReference type="OMA" id="YQLEFNQ"/>
<dbReference type="OrthoDB" id="6077919at2759"/>
<dbReference type="PAN-GO" id="Q8N859">
    <property type="GO annotations" value="3 GO annotations based on evolutionary models"/>
</dbReference>
<dbReference type="PhylomeDB" id="Q8N859"/>
<dbReference type="TreeFam" id="TF337055"/>
<dbReference type="PathwayCommons" id="Q8N859"/>
<dbReference type="Reactome" id="R-HSA-212436">
    <property type="pathway name" value="Generic Transcription Pathway"/>
</dbReference>
<dbReference type="SignaLink" id="Q8N859"/>
<dbReference type="BioGRID-ORCS" id="349075">
    <property type="hits" value="8 hits in 1170 CRISPR screens"/>
</dbReference>
<dbReference type="ChiTaRS" id="ZNF713">
    <property type="organism name" value="human"/>
</dbReference>
<dbReference type="GenomeRNAi" id="349075"/>
<dbReference type="Pharos" id="Q8N859">
    <property type="development level" value="Tdark"/>
</dbReference>
<dbReference type="PRO" id="PR:Q8N859"/>
<dbReference type="Proteomes" id="UP000005640">
    <property type="component" value="Chromosome 7"/>
</dbReference>
<dbReference type="RNAct" id="Q8N859">
    <property type="molecule type" value="protein"/>
</dbReference>
<dbReference type="Bgee" id="ENSG00000178665">
    <property type="expression patterns" value="Expressed in cortical plate and 126 other cell types or tissues"/>
</dbReference>
<dbReference type="ExpressionAtlas" id="Q8N859">
    <property type="expression patterns" value="baseline and differential"/>
</dbReference>
<dbReference type="GO" id="GO:0005634">
    <property type="term" value="C:nucleus"/>
    <property type="evidence" value="ECO:0007669"/>
    <property type="project" value="UniProtKB-SubCell"/>
</dbReference>
<dbReference type="GO" id="GO:0000981">
    <property type="term" value="F:DNA-binding transcription factor activity, RNA polymerase II-specific"/>
    <property type="evidence" value="ECO:0000318"/>
    <property type="project" value="GO_Central"/>
</dbReference>
<dbReference type="GO" id="GO:0000978">
    <property type="term" value="F:RNA polymerase II cis-regulatory region sequence-specific DNA binding"/>
    <property type="evidence" value="ECO:0000318"/>
    <property type="project" value="GO_Central"/>
</dbReference>
<dbReference type="GO" id="GO:1990837">
    <property type="term" value="F:sequence-specific double-stranded DNA binding"/>
    <property type="evidence" value="ECO:0000314"/>
    <property type="project" value="ARUK-UCL"/>
</dbReference>
<dbReference type="GO" id="GO:0008270">
    <property type="term" value="F:zinc ion binding"/>
    <property type="evidence" value="ECO:0007669"/>
    <property type="project" value="UniProtKB-KW"/>
</dbReference>
<dbReference type="GO" id="GO:0006355">
    <property type="term" value="P:regulation of DNA-templated transcription"/>
    <property type="evidence" value="ECO:0000318"/>
    <property type="project" value="GO_Central"/>
</dbReference>
<dbReference type="CDD" id="cd07765">
    <property type="entry name" value="KRAB_A-box"/>
    <property type="match status" value="1"/>
</dbReference>
<dbReference type="FunFam" id="3.30.160.60:FF:001498">
    <property type="entry name" value="Zinc finger protein 404"/>
    <property type="match status" value="1"/>
</dbReference>
<dbReference type="FunFam" id="3.30.160.60:FF:001914">
    <property type="entry name" value="Zinc finger protein 713"/>
    <property type="match status" value="2"/>
</dbReference>
<dbReference type="FunFam" id="3.30.160.60:FF:000330">
    <property type="entry name" value="Zinc finger with KRAB and SCAN domains 1"/>
    <property type="match status" value="2"/>
</dbReference>
<dbReference type="Gene3D" id="6.10.140.140">
    <property type="match status" value="1"/>
</dbReference>
<dbReference type="Gene3D" id="3.30.160.60">
    <property type="entry name" value="Classic Zinc Finger"/>
    <property type="match status" value="7"/>
</dbReference>
<dbReference type="InterPro" id="IPR001909">
    <property type="entry name" value="KRAB"/>
</dbReference>
<dbReference type="InterPro" id="IPR036051">
    <property type="entry name" value="KRAB_dom_sf"/>
</dbReference>
<dbReference type="InterPro" id="IPR050758">
    <property type="entry name" value="Znf_C2H2-type"/>
</dbReference>
<dbReference type="InterPro" id="IPR036236">
    <property type="entry name" value="Znf_C2H2_sf"/>
</dbReference>
<dbReference type="InterPro" id="IPR013087">
    <property type="entry name" value="Znf_C2H2_type"/>
</dbReference>
<dbReference type="PANTHER" id="PTHR23234:SF10">
    <property type="entry name" value="RIKEN CDNA 6720489N17 GENE-RELATED"/>
    <property type="match status" value="1"/>
</dbReference>
<dbReference type="PANTHER" id="PTHR23234">
    <property type="entry name" value="ZNF44 PROTEIN"/>
    <property type="match status" value="1"/>
</dbReference>
<dbReference type="Pfam" id="PF01352">
    <property type="entry name" value="KRAB"/>
    <property type="match status" value="1"/>
</dbReference>
<dbReference type="Pfam" id="PF00096">
    <property type="entry name" value="zf-C2H2"/>
    <property type="match status" value="3"/>
</dbReference>
<dbReference type="Pfam" id="PF13465">
    <property type="entry name" value="zf-H2C2_2"/>
    <property type="match status" value="1"/>
</dbReference>
<dbReference type="SMART" id="SM00349">
    <property type="entry name" value="KRAB"/>
    <property type="match status" value="1"/>
</dbReference>
<dbReference type="SMART" id="SM00355">
    <property type="entry name" value="ZnF_C2H2"/>
    <property type="match status" value="6"/>
</dbReference>
<dbReference type="SUPFAM" id="SSF57667">
    <property type="entry name" value="beta-beta-alpha zinc fingers"/>
    <property type="match status" value="4"/>
</dbReference>
<dbReference type="SUPFAM" id="SSF109640">
    <property type="entry name" value="KRAB domain (Kruppel-associated box)"/>
    <property type="match status" value="1"/>
</dbReference>
<dbReference type="PROSITE" id="PS50805">
    <property type="entry name" value="KRAB"/>
    <property type="match status" value="1"/>
</dbReference>
<dbReference type="PROSITE" id="PS00028">
    <property type="entry name" value="ZINC_FINGER_C2H2_1"/>
    <property type="match status" value="5"/>
</dbReference>
<dbReference type="PROSITE" id="PS50157">
    <property type="entry name" value="ZINC_FINGER_C2H2_2"/>
    <property type="match status" value="6"/>
</dbReference>
<reference key="1">
    <citation type="journal article" date="2003" name="Nature">
        <title>The DNA sequence of human chromosome 7.</title>
        <authorList>
            <person name="Hillier L.W."/>
            <person name="Fulton R.S."/>
            <person name="Fulton L.A."/>
            <person name="Graves T.A."/>
            <person name="Pepin K.H."/>
            <person name="Wagner-McPherson C."/>
            <person name="Layman D."/>
            <person name="Maas J."/>
            <person name="Jaeger S."/>
            <person name="Walker R."/>
            <person name="Wylie K."/>
            <person name="Sekhon M."/>
            <person name="Becker M.C."/>
            <person name="O'Laughlin M.D."/>
            <person name="Schaller M.E."/>
            <person name="Fewell G.A."/>
            <person name="Delehaunty K.D."/>
            <person name="Miner T.L."/>
            <person name="Nash W.E."/>
            <person name="Cordes M."/>
            <person name="Du H."/>
            <person name="Sun H."/>
            <person name="Edwards J."/>
            <person name="Bradshaw-Cordum H."/>
            <person name="Ali J."/>
            <person name="Andrews S."/>
            <person name="Isak A."/>
            <person name="Vanbrunt A."/>
            <person name="Nguyen C."/>
            <person name="Du F."/>
            <person name="Lamar B."/>
            <person name="Courtney L."/>
            <person name="Kalicki J."/>
            <person name="Ozersky P."/>
            <person name="Bielicki L."/>
            <person name="Scott K."/>
            <person name="Holmes A."/>
            <person name="Harkins R."/>
            <person name="Harris A."/>
            <person name="Strong C.M."/>
            <person name="Hou S."/>
            <person name="Tomlinson C."/>
            <person name="Dauphin-Kohlberg S."/>
            <person name="Kozlowicz-Reilly A."/>
            <person name="Leonard S."/>
            <person name="Rohlfing T."/>
            <person name="Rock S.M."/>
            <person name="Tin-Wollam A.-M."/>
            <person name="Abbott A."/>
            <person name="Minx P."/>
            <person name="Maupin R."/>
            <person name="Strowmatt C."/>
            <person name="Latreille P."/>
            <person name="Miller N."/>
            <person name="Johnson D."/>
            <person name="Murray J."/>
            <person name="Woessner J.P."/>
            <person name="Wendl M.C."/>
            <person name="Yang S.-P."/>
            <person name="Schultz B.R."/>
            <person name="Wallis J.W."/>
            <person name="Spieth J."/>
            <person name="Bieri T.A."/>
            <person name="Nelson J.O."/>
            <person name="Berkowicz N."/>
            <person name="Wohldmann P.E."/>
            <person name="Cook L.L."/>
            <person name="Hickenbotham M.T."/>
            <person name="Eldred J."/>
            <person name="Williams D."/>
            <person name="Bedell J.A."/>
            <person name="Mardis E.R."/>
            <person name="Clifton S.W."/>
            <person name="Chissoe S.L."/>
            <person name="Marra M.A."/>
            <person name="Raymond C."/>
            <person name="Haugen E."/>
            <person name="Gillett W."/>
            <person name="Zhou Y."/>
            <person name="James R."/>
            <person name="Phelps K."/>
            <person name="Iadanoto S."/>
            <person name="Bubb K."/>
            <person name="Simms E."/>
            <person name="Levy R."/>
            <person name="Clendenning J."/>
            <person name="Kaul R."/>
            <person name="Kent W.J."/>
            <person name="Furey T.S."/>
            <person name="Baertsch R.A."/>
            <person name="Brent M.R."/>
            <person name="Keibler E."/>
            <person name="Flicek P."/>
            <person name="Bork P."/>
            <person name="Suyama M."/>
            <person name="Bailey J.A."/>
            <person name="Portnoy M.E."/>
            <person name="Torrents D."/>
            <person name="Chinwalla A.T."/>
            <person name="Gish W.R."/>
            <person name="Eddy S.R."/>
            <person name="McPherson J.D."/>
            <person name="Olson M.V."/>
            <person name="Eichler E.E."/>
            <person name="Green E.D."/>
            <person name="Waterston R.H."/>
            <person name="Wilson R.K."/>
        </authorList>
    </citation>
    <scope>NUCLEOTIDE SEQUENCE [LARGE SCALE GENOMIC DNA]</scope>
    <scope>IDENTIFICATION</scope>
</reference>
<reference key="2">
    <citation type="journal article" date="2004" name="Nat. Genet.">
        <title>Complete sequencing and characterization of 21,243 full-length human cDNAs.</title>
        <authorList>
            <person name="Ota T."/>
            <person name="Suzuki Y."/>
            <person name="Nishikawa T."/>
            <person name="Otsuki T."/>
            <person name="Sugiyama T."/>
            <person name="Irie R."/>
            <person name="Wakamatsu A."/>
            <person name="Hayashi K."/>
            <person name="Sato H."/>
            <person name="Nagai K."/>
            <person name="Kimura K."/>
            <person name="Makita H."/>
            <person name="Sekine M."/>
            <person name="Obayashi M."/>
            <person name="Nishi T."/>
            <person name="Shibahara T."/>
            <person name="Tanaka T."/>
            <person name="Ishii S."/>
            <person name="Yamamoto J."/>
            <person name="Saito K."/>
            <person name="Kawai Y."/>
            <person name="Isono Y."/>
            <person name="Nakamura Y."/>
            <person name="Nagahari K."/>
            <person name="Murakami K."/>
            <person name="Yasuda T."/>
            <person name="Iwayanagi T."/>
            <person name="Wagatsuma M."/>
            <person name="Shiratori A."/>
            <person name="Sudo H."/>
            <person name="Hosoiri T."/>
            <person name="Kaku Y."/>
            <person name="Kodaira H."/>
            <person name="Kondo H."/>
            <person name="Sugawara M."/>
            <person name="Takahashi M."/>
            <person name="Kanda K."/>
            <person name="Yokoi T."/>
            <person name="Furuya T."/>
            <person name="Kikkawa E."/>
            <person name="Omura Y."/>
            <person name="Abe K."/>
            <person name="Kamihara K."/>
            <person name="Katsuta N."/>
            <person name="Sato K."/>
            <person name="Tanikawa M."/>
            <person name="Yamazaki M."/>
            <person name="Ninomiya K."/>
            <person name="Ishibashi T."/>
            <person name="Yamashita H."/>
            <person name="Murakawa K."/>
            <person name="Fujimori K."/>
            <person name="Tanai H."/>
            <person name="Kimata M."/>
            <person name="Watanabe M."/>
            <person name="Hiraoka S."/>
            <person name="Chiba Y."/>
            <person name="Ishida S."/>
            <person name="Ono Y."/>
            <person name="Takiguchi S."/>
            <person name="Watanabe S."/>
            <person name="Yosida M."/>
            <person name="Hotuta T."/>
            <person name="Kusano J."/>
            <person name="Kanehori K."/>
            <person name="Takahashi-Fujii A."/>
            <person name="Hara H."/>
            <person name="Tanase T.-O."/>
            <person name="Nomura Y."/>
            <person name="Togiya S."/>
            <person name="Komai F."/>
            <person name="Hara R."/>
            <person name="Takeuchi K."/>
            <person name="Arita M."/>
            <person name="Imose N."/>
            <person name="Musashino K."/>
            <person name="Yuuki H."/>
            <person name="Oshima A."/>
            <person name="Sasaki N."/>
            <person name="Aotsuka S."/>
            <person name="Yoshikawa Y."/>
            <person name="Matsunawa H."/>
            <person name="Ichihara T."/>
            <person name="Shiohata N."/>
            <person name="Sano S."/>
            <person name="Moriya S."/>
            <person name="Momiyama H."/>
            <person name="Satoh N."/>
            <person name="Takami S."/>
            <person name="Terashima Y."/>
            <person name="Suzuki O."/>
            <person name="Nakagawa S."/>
            <person name="Senoh A."/>
            <person name="Mizoguchi H."/>
            <person name="Goto Y."/>
            <person name="Shimizu F."/>
            <person name="Wakebe H."/>
            <person name="Hishigaki H."/>
            <person name="Watanabe T."/>
            <person name="Sugiyama A."/>
            <person name="Takemoto M."/>
            <person name="Kawakami B."/>
            <person name="Yamazaki M."/>
            <person name="Watanabe K."/>
            <person name="Kumagai A."/>
            <person name="Itakura S."/>
            <person name="Fukuzumi Y."/>
            <person name="Fujimori Y."/>
            <person name="Komiyama M."/>
            <person name="Tashiro H."/>
            <person name="Tanigami A."/>
            <person name="Fujiwara T."/>
            <person name="Ono T."/>
            <person name="Yamada K."/>
            <person name="Fujii Y."/>
            <person name="Ozaki K."/>
            <person name="Hirao M."/>
            <person name="Ohmori Y."/>
            <person name="Kawabata A."/>
            <person name="Hikiji T."/>
            <person name="Kobatake N."/>
            <person name="Inagaki H."/>
            <person name="Ikema Y."/>
            <person name="Okamoto S."/>
            <person name="Okitani R."/>
            <person name="Kawakami T."/>
            <person name="Noguchi S."/>
            <person name="Itoh T."/>
            <person name="Shigeta K."/>
            <person name="Senba T."/>
            <person name="Matsumura K."/>
            <person name="Nakajima Y."/>
            <person name="Mizuno T."/>
            <person name="Morinaga M."/>
            <person name="Sasaki M."/>
            <person name="Togashi T."/>
            <person name="Oyama M."/>
            <person name="Hata H."/>
            <person name="Watanabe M."/>
            <person name="Komatsu T."/>
            <person name="Mizushima-Sugano J."/>
            <person name="Satoh T."/>
            <person name="Shirai Y."/>
            <person name="Takahashi Y."/>
            <person name="Nakagawa K."/>
            <person name="Okumura K."/>
            <person name="Nagase T."/>
            <person name="Nomura N."/>
            <person name="Kikuchi H."/>
            <person name="Masuho Y."/>
            <person name="Yamashita R."/>
            <person name="Nakai K."/>
            <person name="Yada T."/>
            <person name="Nakamura Y."/>
            <person name="Ohara O."/>
            <person name="Isogai T."/>
            <person name="Sugano S."/>
        </authorList>
    </citation>
    <scope>NUCLEOTIDE SEQUENCE [LARGE SCALE MRNA] OF 2-443</scope>
    <source>
        <tissue>Spleen</tissue>
    </source>
</reference>
<reference key="3">
    <citation type="journal article" date="2014" name="Hum. Mutat.">
        <title>A CGG-repeat expansion mutation in ZNF713 causes FRA7A: association with autistic spectrum disorder in two families.</title>
        <authorList>
            <person name="Metsu S."/>
            <person name="Rainger J.K."/>
            <person name="Debacker K."/>
            <person name="Bernhard B."/>
            <person name="Rooms L."/>
            <person name="Grafodatskaya D."/>
            <person name="Weksberg R."/>
            <person name="Fombonne E."/>
            <person name="Taylor M.S."/>
            <person name="Scherer S.W."/>
            <person name="Kooy R.F."/>
            <person name="FitzPatrick D.R."/>
        </authorList>
    </citation>
    <scope>POTENTIAL INVOLVEMENT IN AUTISTIC DISORDER</scope>
    <scope>TISSUE SPECIFICITY</scope>
</reference>
<proteinExistence type="evidence at protein level"/>